<keyword id="KW-0067">ATP-binding</keyword>
<keyword id="KW-0963">Cytoplasm</keyword>
<keyword id="KW-0227">DNA damage</keyword>
<keyword id="KW-0233">DNA recombination</keyword>
<keyword id="KW-0234">DNA repair</keyword>
<keyword id="KW-0238">DNA-binding</keyword>
<keyword id="KW-0378">Hydrolase</keyword>
<keyword id="KW-0547">Nucleotide-binding</keyword>
<keyword id="KW-1185">Reference proteome</keyword>
<gene>
    <name evidence="1" type="primary">ruvB</name>
    <name type="ordered locus">Plut_1619</name>
</gene>
<organism>
    <name type="scientific">Chlorobium luteolum (strain DSM 273 / BCRC 81028 / 2530)</name>
    <name type="common">Pelodictyon luteolum</name>
    <dbReference type="NCBI Taxonomy" id="319225"/>
    <lineage>
        <taxon>Bacteria</taxon>
        <taxon>Pseudomonadati</taxon>
        <taxon>Chlorobiota</taxon>
        <taxon>Chlorobiia</taxon>
        <taxon>Chlorobiales</taxon>
        <taxon>Chlorobiaceae</taxon>
        <taxon>Chlorobium/Pelodictyon group</taxon>
        <taxon>Pelodictyon</taxon>
    </lineage>
</organism>
<sequence>MRIELLNTPVDAVELRIEDQIRPRRMEDFTGQQRLTDNLKVFISAARMRGDALDHVLLSGPPGLGKTTLAHIIAEEMGGSLKATSGPMLDKAGNLAGILTSLQKGDVLFIDEIHRMPPAVEEYLYSAMEDFRIDIMLDSGPSARAVQLKVEPFTLVGATTRSGLLTAPLRARFGISNRFDYYPPELLETILMRSSTILGIGIERDAASEIAGRSRGTPRIANRLLRRARDFAQVDGMEIISRPTAMKTLDSLEIDEEGLDEMDKKIMDAVVNRFSGGPVGVGSLAVSVGEEQDTIEEVYEPYLIQAGYLSRTPRGRVATQRALLRFSDGSSALRGTLFDGQEHV</sequence>
<accession>Q3B2F8</accession>
<comment type="function">
    <text evidence="1">The RuvA-RuvB-RuvC complex processes Holliday junction (HJ) DNA during genetic recombination and DNA repair, while the RuvA-RuvB complex plays an important role in the rescue of blocked DNA replication forks via replication fork reversal (RFR). RuvA specifically binds to HJ cruciform DNA, conferring on it an open structure. The RuvB hexamer acts as an ATP-dependent pump, pulling dsDNA into and through the RuvAB complex. RuvB forms 2 homohexamers on either side of HJ DNA bound by 1 or 2 RuvA tetramers; 4 subunits per hexamer contact DNA at a time. Coordinated motions by a converter formed by DNA-disengaged RuvB subunits stimulates ATP hydrolysis and nucleotide exchange. Immobilization of the converter enables RuvB to convert the ATP-contained energy into a lever motion, pulling 2 nucleotides of DNA out of the RuvA tetramer per ATP hydrolyzed, thus driving DNA branch migration. The RuvB motors rotate together with the DNA substrate, which together with the progressing nucleotide cycle form the mechanistic basis for DNA recombination by continuous HJ branch migration. Branch migration allows RuvC to scan DNA until it finds its consensus sequence, where it cleaves and resolves cruciform DNA.</text>
</comment>
<comment type="catalytic activity">
    <reaction evidence="1">
        <text>ATP + H2O = ADP + phosphate + H(+)</text>
        <dbReference type="Rhea" id="RHEA:13065"/>
        <dbReference type="ChEBI" id="CHEBI:15377"/>
        <dbReference type="ChEBI" id="CHEBI:15378"/>
        <dbReference type="ChEBI" id="CHEBI:30616"/>
        <dbReference type="ChEBI" id="CHEBI:43474"/>
        <dbReference type="ChEBI" id="CHEBI:456216"/>
    </reaction>
</comment>
<comment type="subunit">
    <text evidence="1">Homohexamer. Forms an RuvA(8)-RuvB(12)-Holliday junction (HJ) complex. HJ DNA is sandwiched between 2 RuvA tetramers; dsDNA enters through RuvA and exits via RuvB. An RuvB hexamer assembles on each DNA strand where it exits the tetramer. Each RuvB hexamer is contacted by two RuvA subunits (via domain III) on 2 adjacent RuvB subunits; this complex drives branch migration. In the full resolvosome a probable DNA-RuvA(4)-RuvB(12)-RuvC(2) complex forms which resolves the HJ.</text>
</comment>
<comment type="subcellular location">
    <subcellularLocation>
        <location evidence="1">Cytoplasm</location>
    </subcellularLocation>
</comment>
<comment type="domain">
    <text evidence="1">Has 3 domains, the large (RuvB-L) and small ATPase (RuvB-S) domains and the C-terminal head (RuvB-H) domain. The head domain binds DNA, while the ATPase domains jointly bind ATP, ADP or are empty depending on the state of the subunit in the translocation cycle. During a single DNA translocation step the structure of each domain remains the same, but their relative positions change.</text>
</comment>
<comment type="similarity">
    <text evidence="1">Belongs to the RuvB family.</text>
</comment>
<evidence type="ECO:0000255" key="1">
    <source>
        <dbReference type="HAMAP-Rule" id="MF_00016"/>
    </source>
</evidence>
<feature type="chain" id="PRO_0000235387" description="Holliday junction branch migration complex subunit RuvB">
    <location>
        <begin position="1"/>
        <end position="344"/>
    </location>
</feature>
<feature type="region of interest" description="Large ATPase domain (RuvB-L)" evidence="1">
    <location>
        <begin position="1"/>
        <end position="182"/>
    </location>
</feature>
<feature type="region of interest" description="Small ATPAse domain (RuvB-S)" evidence="1">
    <location>
        <begin position="183"/>
        <end position="253"/>
    </location>
</feature>
<feature type="region of interest" description="Head domain (RuvB-H)" evidence="1">
    <location>
        <begin position="256"/>
        <end position="344"/>
    </location>
</feature>
<feature type="binding site" evidence="1">
    <location>
        <position position="21"/>
    </location>
    <ligand>
        <name>ATP</name>
        <dbReference type="ChEBI" id="CHEBI:30616"/>
    </ligand>
</feature>
<feature type="binding site" evidence="1">
    <location>
        <position position="22"/>
    </location>
    <ligand>
        <name>ATP</name>
        <dbReference type="ChEBI" id="CHEBI:30616"/>
    </ligand>
</feature>
<feature type="binding site" evidence="1">
    <location>
        <position position="63"/>
    </location>
    <ligand>
        <name>ATP</name>
        <dbReference type="ChEBI" id="CHEBI:30616"/>
    </ligand>
</feature>
<feature type="binding site" evidence="1">
    <location>
        <position position="66"/>
    </location>
    <ligand>
        <name>ATP</name>
        <dbReference type="ChEBI" id="CHEBI:30616"/>
    </ligand>
</feature>
<feature type="binding site" evidence="1">
    <location>
        <position position="67"/>
    </location>
    <ligand>
        <name>ATP</name>
        <dbReference type="ChEBI" id="CHEBI:30616"/>
    </ligand>
</feature>
<feature type="binding site" evidence="1">
    <location>
        <position position="67"/>
    </location>
    <ligand>
        <name>Mg(2+)</name>
        <dbReference type="ChEBI" id="CHEBI:18420"/>
    </ligand>
</feature>
<feature type="binding site" evidence="1">
    <location>
        <position position="68"/>
    </location>
    <ligand>
        <name>ATP</name>
        <dbReference type="ChEBI" id="CHEBI:30616"/>
    </ligand>
</feature>
<feature type="binding site" evidence="1">
    <location>
        <begin position="129"/>
        <end position="131"/>
    </location>
    <ligand>
        <name>ATP</name>
        <dbReference type="ChEBI" id="CHEBI:30616"/>
    </ligand>
</feature>
<feature type="binding site" evidence="1">
    <location>
        <position position="172"/>
    </location>
    <ligand>
        <name>ATP</name>
        <dbReference type="ChEBI" id="CHEBI:30616"/>
    </ligand>
</feature>
<feature type="binding site" evidence="1">
    <location>
        <position position="182"/>
    </location>
    <ligand>
        <name>ATP</name>
        <dbReference type="ChEBI" id="CHEBI:30616"/>
    </ligand>
</feature>
<feature type="binding site" evidence="1">
    <location>
        <position position="219"/>
    </location>
    <ligand>
        <name>ATP</name>
        <dbReference type="ChEBI" id="CHEBI:30616"/>
    </ligand>
</feature>
<feature type="binding site" evidence="1">
    <location>
        <position position="311"/>
    </location>
    <ligand>
        <name>DNA</name>
        <dbReference type="ChEBI" id="CHEBI:16991"/>
    </ligand>
</feature>
<feature type="binding site" evidence="1">
    <location>
        <position position="316"/>
    </location>
    <ligand>
        <name>DNA</name>
        <dbReference type="ChEBI" id="CHEBI:16991"/>
    </ligand>
</feature>
<protein>
    <recommendedName>
        <fullName evidence="1">Holliday junction branch migration complex subunit RuvB</fullName>
        <ecNumber evidence="1">3.6.4.-</ecNumber>
    </recommendedName>
</protein>
<dbReference type="EC" id="3.6.4.-" evidence="1"/>
<dbReference type="EMBL" id="CP000096">
    <property type="protein sequence ID" value="ABB24473.1"/>
    <property type="molecule type" value="Genomic_DNA"/>
</dbReference>
<dbReference type="RefSeq" id="WP_011358345.1">
    <property type="nucleotide sequence ID" value="NC_007512.1"/>
</dbReference>
<dbReference type="SMR" id="Q3B2F8"/>
<dbReference type="STRING" id="319225.Plut_1619"/>
<dbReference type="KEGG" id="plt:Plut_1619"/>
<dbReference type="eggNOG" id="COG2255">
    <property type="taxonomic scope" value="Bacteria"/>
</dbReference>
<dbReference type="HOGENOM" id="CLU_055599_1_0_10"/>
<dbReference type="OrthoDB" id="9804478at2"/>
<dbReference type="Proteomes" id="UP000002709">
    <property type="component" value="Chromosome"/>
</dbReference>
<dbReference type="GO" id="GO:0005737">
    <property type="term" value="C:cytoplasm"/>
    <property type="evidence" value="ECO:0007669"/>
    <property type="project" value="UniProtKB-SubCell"/>
</dbReference>
<dbReference type="GO" id="GO:0048476">
    <property type="term" value="C:Holliday junction resolvase complex"/>
    <property type="evidence" value="ECO:0007669"/>
    <property type="project" value="UniProtKB-UniRule"/>
</dbReference>
<dbReference type="GO" id="GO:0005524">
    <property type="term" value="F:ATP binding"/>
    <property type="evidence" value="ECO:0007669"/>
    <property type="project" value="UniProtKB-UniRule"/>
</dbReference>
<dbReference type="GO" id="GO:0016887">
    <property type="term" value="F:ATP hydrolysis activity"/>
    <property type="evidence" value="ECO:0007669"/>
    <property type="project" value="InterPro"/>
</dbReference>
<dbReference type="GO" id="GO:0000400">
    <property type="term" value="F:four-way junction DNA binding"/>
    <property type="evidence" value="ECO:0007669"/>
    <property type="project" value="UniProtKB-UniRule"/>
</dbReference>
<dbReference type="GO" id="GO:0009378">
    <property type="term" value="F:four-way junction helicase activity"/>
    <property type="evidence" value="ECO:0007669"/>
    <property type="project" value="InterPro"/>
</dbReference>
<dbReference type="GO" id="GO:0006310">
    <property type="term" value="P:DNA recombination"/>
    <property type="evidence" value="ECO:0007669"/>
    <property type="project" value="UniProtKB-UniRule"/>
</dbReference>
<dbReference type="GO" id="GO:0006281">
    <property type="term" value="P:DNA repair"/>
    <property type="evidence" value="ECO:0007669"/>
    <property type="project" value="UniProtKB-UniRule"/>
</dbReference>
<dbReference type="CDD" id="cd00009">
    <property type="entry name" value="AAA"/>
    <property type="match status" value="1"/>
</dbReference>
<dbReference type="Gene3D" id="1.10.8.60">
    <property type="match status" value="1"/>
</dbReference>
<dbReference type="Gene3D" id="3.40.50.300">
    <property type="entry name" value="P-loop containing nucleotide triphosphate hydrolases"/>
    <property type="match status" value="1"/>
</dbReference>
<dbReference type="Gene3D" id="1.10.10.10">
    <property type="entry name" value="Winged helix-like DNA-binding domain superfamily/Winged helix DNA-binding domain"/>
    <property type="match status" value="1"/>
</dbReference>
<dbReference type="HAMAP" id="MF_00016">
    <property type="entry name" value="DNA_HJ_migration_RuvB"/>
    <property type="match status" value="1"/>
</dbReference>
<dbReference type="InterPro" id="IPR003593">
    <property type="entry name" value="AAA+_ATPase"/>
</dbReference>
<dbReference type="InterPro" id="IPR041445">
    <property type="entry name" value="AAA_lid_4"/>
</dbReference>
<dbReference type="InterPro" id="IPR004605">
    <property type="entry name" value="DNA_helicase_Holl-junc_RuvB"/>
</dbReference>
<dbReference type="InterPro" id="IPR027417">
    <property type="entry name" value="P-loop_NTPase"/>
</dbReference>
<dbReference type="InterPro" id="IPR008824">
    <property type="entry name" value="RuvB-like_N"/>
</dbReference>
<dbReference type="InterPro" id="IPR008823">
    <property type="entry name" value="RuvB_C"/>
</dbReference>
<dbReference type="InterPro" id="IPR036388">
    <property type="entry name" value="WH-like_DNA-bd_sf"/>
</dbReference>
<dbReference type="InterPro" id="IPR036390">
    <property type="entry name" value="WH_DNA-bd_sf"/>
</dbReference>
<dbReference type="NCBIfam" id="NF000868">
    <property type="entry name" value="PRK00080.1"/>
    <property type="match status" value="1"/>
</dbReference>
<dbReference type="NCBIfam" id="TIGR00635">
    <property type="entry name" value="ruvB"/>
    <property type="match status" value="1"/>
</dbReference>
<dbReference type="PANTHER" id="PTHR42848">
    <property type="match status" value="1"/>
</dbReference>
<dbReference type="PANTHER" id="PTHR42848:SF1">
    <property type="entry name" value="HOLLIDAY JUNCTION BRANCH MIGRATION COMPLEX SUBUNIT RUVB"/>
    <property type="match status" value="1"/>
</dbReference>
<dbReference type="Pfam" id="PF17864">
    <property type="entry name" value="AAA_lid_4"/>
    <property type="match status" value="1"/>
</dbReference>
<dbReference type="Pfam" id="PF05491">
    <property type="entry name" value="RuvB_C"/>
    <property type="match status" value="1"/>
</dbReference>
<dbReference type="Pfam" id="PF05496">
    <property type="entry name" value="RuvB_N"/>
    <property type="match status" value="1"/>
</dbReference>
<dbReference type="SMART" id="SM00382">
    <property type="entry name" value="AAA"/>
    <property type="match status" value="1"/>
</dbReference>
<dbReference type="SUPFAM" id="SSF52540">
    <property type="entry name" value="P-loop containing nucleoside triphosphate hydrolases"/>
    <property type="match status" value="1"/>
</dbReference>
<dbReference type="SUPFAM" id="SSF46785">
    <property type="entry name" value="Winged helix' DNA-binding domain"/>
    <property type="match status" value="1"/>
</dbReference>
<proteinExistence type="inferred from homology"/>
<reference key="1">
    <citation type="submission" date="2005-08" db="EMBL/GenBank/DDBJ databases">
        <title>Complete sequence of Pelodictyon luteolum DSM 273.</title>
        <authorList>
            <consortium name="US DOE Joint Genome Institute"/>
            <person name="Copeland A."/>
            <person name="Lucas S."/>
            <person name="Lapidus A."/>
            <person name="Barry K."/>
            <person name="Detter J.C."/>
            <person name="Glavina T."/>
            <person name="Hammon N."/>
            <person name="Israni S."/>
            <person name="Pitluck S."/>
            <person name="Bryant D."/>
            <person name="Schmutz J."/>
            <person name="Larimer F."/>
            <person name="Land M."/>
            <person name="Kyrpides N."/>
            <person name="Ivanova N."/>
            <person name="Richardson P."/>
        </authorList>
    </citation>
    <scope>NUCLEOTIDE SEQUENCE [LARGE SCALE GENOMIC DNA]</scope>
    <source>
        <strain>DSM 273 / BCRC 81028 / 2530</strain>
    </source>
</reference>
<name>RUVB_CHLL3</name>